<dbReference type="EC" id="3.1.1.96" evidence="1"/>
<dbReference type="EMBL" id="CP001114">
    <property type="protein sequence ID" value="ACO45856.1"/>
    <property type="molecule type" value="Genomic_DNA"/>
</dbReference>
<dbReference type="RefSeq" id="WP_012692979.1">
    <property type="nucleotide sequence ID" value="NC_012526.1"/>
</dbReference>
<dbReference type="SMR" id="C1CUI9"/>
<dbReference type="STRING" id="546414.Deide_09760"/>
<dbReference type="PaxDb" id="546414-Deide_09760"/>
<dbReference type="KEGG" id="ddr:Deide_09760"/>
<dbReference type="eggNOG" id="COG1490">
    <property type="taxonomic scope" value="Bacteria"/>
</dbReference>
<dbReference type="HOGENOM" id="CLU_076901_1_0_0"/>
<dbReference type="OrthoDB" id="9801395at2"/>
<dbReference type="Proteomes" id="UP000002208">
    <property type="component" value="Chromosome"/>
</dbReference>
<dbReference type="GO" id="GO:0005737">
    <property type="term" value="C:cytoplasm"/>
    <property type="evidence" value="ECO:0007669"/>
    <property type="project" value="UniProtKB-SubCell"/>
</dbReference>
<dbReference type="GO" id="GO:0051500">
    <property type="term" value="F:D-tyrosyl-tRNA(Tyr) deacylase activity"/>
    <property type="evidence" value="ECO:0007669"/>
    <property type="project" value="TreeGrafter"/>
</dbReference>
<dbReference type="GO" id="GO:0106026">
    <property type="term" value="F:Gly-tRNA(Ala) deacylase activity"/>
    <property type="evidence" value="ECO:0007669"/>
    <property type="project" value="UniProtKB-UniRule"/>
</dbReference>
<dbReference type="GO" id="GO:0043908">
    <property type="term" value="F:Ser(Gly)-tRNA(Ala) hydrolase activity"/>
    <property type="evidence" value="ECO:0007669"/>
    <property type="project" value="UniProtKB-UniRule"/>
</dbReference>
<dbReference type="GO" id="GO:0000049">
    <property type="term" value="F:tRNA binding"/>
    <property type="evidence" value="ECO:0007669"/>
    <property type="project" value="UniProtKB-UniRule"/>
</dbReference>
<dbReference type="GO" id="GO:0019478">
    <property type="term" value="P:D-amino acid catabolic process"/>
    <property type="evidence" value="ECO:0007669"/>
    <property type="project" value="UniProtKB-UniRule"/>
</dbReference>
<dbReference type="CDD" id="cd00563">
    <property type="entry name" value="Dtyr_deacylase"/>
    <property type="match status" value="1"/>
</dbReference>
<dbReference type="FunFam" id="3.50.80.10:FF:000001">
    <property type="entry name" value="D-aminoacyl-tRNA deacylase"/>
    <property type="match status" value="1"/>
</dbReference>
<dbReference type="Gene3D" id="3.50.80.10">
    <property type="entry name" value="D-tyrosyl-tRNA(Tyr) deacylase"/>
    <property type="match status" value="1"/>
</dbReference>
<dbReference type="HAMAP" id="MF_00518">
    <property type="entry name" value="Deacylase_Dtd"/>
    <property type="match status" value="1"/>
</dbReference>
<dbReference type="InterPro" id="IPR003732">
    <property type="entry name" value="Daa-tRNA_deacyls_DTD"/>
</dbReference>
<dbReference type="InterPro" id="IPR023509">
    <property type="entry name" value="DTD-like_sf"/>
</dbReference>
<dbReference type="NCBIfam" id="TIGR00256">
    <property type="entry name" value="D-aminoacyl-tRNA deacylase"/>
    <property type="match status" value="1"/>
</dbReference>
<dbReference type="PANTHER" id="PTHR10472:SF5">
    <property type="entry name" value="D-AMINOACYL-TRNA DEACYLASE 1"/>
    <property type="match status" value="1"/>
</dbReference>
<dbReference type="PANTHER" id="PTHR10472">
    <property type="entry name" value="D-TYROSYL-TRNA TYR DEACYLASE"/>
    <property type="match status" value="1"/>
</dbReference>
<dbReference type="Pfam" id="PF02580">
    <property type="entry name" value="Tyr_Deacylase"/>
    <property type="match status" value="1"/>
</dbReference>
<dbReference type="SUPFAM" id="SSF69500">
    <property type="entry name" value="DTD-like"/>
    <property type="match status" value="1"/>
</dbReference>
<comment type="function">
    <text evidence="1">An aminoacyl-tRNA editing enzyme that deacylates mischarged D-aminoacyl-tRNAs. Also deacylates mischarged glycyl-tRNA(Ala), protecting cells against glycine mischarging by AlaRS. Acts via tRNA-based rather than protein-based catalysis; rejects L-amino acids rather than detecting D-amino acids in the active site. By recycling D-aminoacyl-tRNA to D-amino acids and free tRNA molecules, this enzyme counteracts the toxicity associated with the formation of D-aminoacyl-tRNA entities in vivo and helps enforce protein L-homochirality.</text>
</comment>
<comment type="catalytic activity">
    <reaction evidence="1">
        <text>glycyl-tRNA(Ala) + H2O = tRNA(Ala) + glycine + H(+)</text>
        <dbReference type="Rhea" id="RHEA:53744"/>
        <dbReference type="Rhea" id="RHEA-COMP:9657"/>
        <dbReference type="Rhea" id="RHEA-COMP:13640"/>
        <dbReference type="ChEBI" id="CHEBI:15377"/>
        <dbReference type="ChEBI" id="CHEBI:15378"/>
        <dbReference type="ChEBI" id="CHEBI:57305"/>
        <dbReference type="ChEBI" id="CHEBI:78442"/>
        <dbReference type="ChEBI" id="CHEBI:78522"/>
        <dbReference type="EC" id="3.1.1.96"/>
    </reaction>
</comment>
<comment type="catalytic activity">
    <reaction evidence="1">
        <text>a D-aminoacyl-tRNA + H2O = a tRNA + a D-alpha-amino acid + H(+)</text>
        <dbReference type="Rhea" id="RHEA:13953"/>
        <dbReference type="Rhea" id="RHEA-COMP:10123"/>
        <dbReference type="Rhea" id="RHEA-COMP:10124"/>
        <dbReference type="ChEBI" id="CHEBI:15377"/>
        <dbReference type="ChEBI" id="CHEBI:15378"/>
        <dbReference type="ChEBI" id="CHEBI:59871"/>
        <dbReference type="ChEBI" id="CHEBI:78442"/>
        <dbReference type="ChEBI" id="CHEBI:79333"/>
        <dbReference type="EC" id="3.1.1.96"/>
    </reaction>
</comment>
<comment type="subunit">
    <text evidence="1">Homodimer.</text>
</comment>
<comment type="subcellular location">
    <subcellularLocation>
        <location evidence="1">Cytoplasm</location>
    </subcellularLocation>
</comment>
<comment type="domain">
    <text evidence="1">A Gly-cisPro motif from one monomer fits into the active site of the other monomer to allow specific chiral rejection of L-amino acids.</text>
</comment>
<comment type="similarity">
    <text evidence="1">Belongs to the DTD family.</text>
</comment>
<proteinExistence type="inferred from homology"/>
<protein>
    <recommendedName>
        <fullName evidence="1">D-aminoacyl-tRNA deacylase</fullName>
        <shortName evidence="1">DTD</shortName>
        <ecNumber evidence="1">3.1.1.96</ecNumber>
    </recommendedName>
    <alternativeName>
        <fullName evidence="1">Gly-tRNA(Ala) deacylase</fullName>
    </alternativeName>
</protein>
<evidence type="ECO:0000255" key="1">
    <source>
        <dbReference type="HAMAP-Rule" id="MF_00518"/>
    </source>
</evidence>
<feature type="chain" id="PRO_1000211723" description="D-aminoacyl-tRNA deacylase">
    <location>
        <begin position="1"/>
        <end position="146"/>
    </location>
</feature>
<feature type="short sequence motif" description="Gly-cisPro motif, important for rejection of L-amino acids" evidence="1">
    <location>
        <begin position="137"/>
        <end position="138"/>
    </location>
</feature>
<reference key="1">
    <citation type="journal article" date="2009" name="PLoS Genet.">
        <title>Alliance of proteomics and genomics to unravel the specificities of Sahara bacterium Deinococcus deserti.</title>
        <authorList>
            <person name="de Groot A."/>
            <person name="Dulermo R."/>
            <person name="Ortet P."/>
            <person name="Blanchard L."/>
            <person name="Guerin P."/>
            <person name="Fernandez B."/>
            <person name="Vacherie B."/>
            <person name="Dossat C."/>
            <person name="Jolivet E."/>
            <person name="Siguier P."/>
            <person name="Chandler M."/>
            <person name="Barakat M."/>
            <person name="Dedieu A."/>
            <person name="Barbe V."/>
            <person name="Heulin T."/>
            <person name="Sommer S."/>
            <person name="Achouak W."/>
            <person name="Armengaud J."/>
        </authorList>
    </citation>
    <scope>NUCLEOTIDE SEQUENCE [LARGE SCALE GENOMIC DNA]</scope>
    <source>
        <strain>DSM 17065 / CIP 109153 / LMG 22923 / VCD115</strain>
    </source>
</reference>
<sequence length="146" mass="15300">MRAVLQRVTRATCTVEGTITGQTGPGLLILLGVAPTDTPEVACALAGKTAKLRIFNDEAGKMNRSVLDIGGGVLSISQFTLYADTRSGNRPSFIAAAPPDRARELYGAFNEALRAQGLEVSEGVFGAHMVLDLTNDGPVTITLDVP</sequence>
<organism>
    <name type="scientific">Deinococcus deserti (strain DSM 17065 / CIP 109153 / LMG 22923 / VCD115)</name>
    <dbReference type="NCBI Taxonomy" id="546414"/>
    <lineage>
        <taxon>Bacteria</taxon>
        <taxon>Thermotogati</taxon>
        <taxon>Deinococcota</taxon>
        <taxon>Deinococci</taxon>
        <taxon>Deinococcales</taxon>
        <taxon>Deinococcaceae</taxon>
        <taxon>Deinococcus</taxon>
    </lineage>
</organism>
<gene>
    <name evidence="1" type="primary">dtd</name>
    <name type="ordered locus">Deide_09760</name>
</gene>
<keyword id="KW-0963">Cytoplasm</keyword>
<keyword id="KW-0378">Hydrolase</keyword>
<keyword id="KW-1185">Reference proteome</keyword>
<keyword id="KW-0694">RNA-binding</keyword>
<keyword id="KW-0820">tRNA-binding</keyword>
<accession>C1CUI9</accession>
<name>DTD_DEIDV</name>